<keyword id="KW-0325">Glycoprotein</keyword>
<keyword id="KW-0433">Leucine-rich repeat</keyword>
<keyword id="KW-0472">Membrane</keyword>
<keyword id="KW-0597">Phosphoprotein</keyword>
<keyword id="KW-0675">Receptor</keyword>
<keyword id="KW-1185">Reference proteome</keyword>
<keyword id="KW-0677">Repeat</keyword>
<keyword id="KW-0732">Signal</keyword>
<keyword id="KW-0812">Transmembrane</keyword>
<keyword id="KW-1133">Transmembrane helix</keyword>
<evidence type="ECO:0000250" key="1">
    <source>
        <dbReference type="UniProtKB" id="Q94AG2"/>
    </source>
</evidence>
<evidence type="ECO:0000250" key="2">
    <source>
        <dbReference type="UniProtKB" id="Q9LSI9"/>
    </source>
</evidence>
<evidence type="ECO:0000255" key="3"/>
<evidence type="ECO:0000255" key="4">
    <source>
        <dbReference type="PROSITE-ProRule" id="PRU00159"/>
    </source>
</evidence>
<evidence type="ECO:0000256" key="5">
    <source>
        <dbReference type="SAM" id="MobiDB-lite"/>
    </source>
</evidence>
<evidence type="ECO:0000305" key="6"/>
<evidence type="ECO:0007744" key="7">
    <source>
    </source>
</evidence>
<accession>P33543</accession>
<sequence>MGMEALRFLHVIFFFVLILHCHCGTSLSGSSDVKLLLGKIKSSLQGNSESLLLSSWNSSVPVCQWRGVKWVFSNGSPLQCSDLSSPQWTNTSLFNDSSLHLLSLQLPSANLTGSLPREIGEFSMLQSVFLNINSLSGSIPLELGYTSSLSDVDLSGNALAGVLPPSIWNLCDKLVSFKIHGNNLSGVLPEPALPNSTCGNLQVLDLGGNKFSGEFPEFITRFKGVKSLDLSSNVFEGLVPEGLGVLELESLNLSHNNFSGMLPDFGESKFGAESFEGNSPSLCGLPLKPCLGSSRLSPGAVAGLVIGLMSGAVVVASLLIGYLQNKKRKSSIESEDDLEEGDEEDEIGEKEGGEGKLVVFQGGENLTLDDVLNATGQVMEKTSYGTVYKAKLSDGGNIALRLLREGTCKDRSSCLPVIRQLGRIRHENLVPLRAFYQGKRGEKLLIYDYLPNISLHDLLHESKPRKPALNWARRHKIALGIARGLAYLHTGQEVPIIHGNIRSKNVLVDDFFFARLTEFGLDKIMVQAVADEIVSQAKSDGYKAPELHKMKKCNPRSDVYAFGILLLEILMGKKPGKSGRNGNEFVDLPSLVKAAVLEETTMEVFDLEAMKGIRSPMEEGLVHALKLAMGCCAPVTTVRPSMEEVVKQLEENRPRNRSALYSPTETRSDAETPF</sequence>
<proteinExistence type="evidence at protein level"/>
<name>TMKL1_ARATH</name>
<reference key="1">
    <citation type="journal article" date="1993" name="Plant Mol. Biol.">
        <title>Characterization of an Arabidopsis thaliana gene (TMKL1) encoding a putative transmembrane protein with an unusual kinase-like domain.</title>
        <authorList>
            <person name="Valon C."/>
            <person name="Smalle J."/>
            <person name="Goodman H.M."/>
            <person name="Giraudat J."/>
        </authorList>
    </citation>
    <scope>NUCLEOTIDE SEQUENCE [MRNA]</scope>
    <source>
        <strain>cv. Columbia</strain>
        <tissue>Green siliques</tissue>
    </source>
</reference>
<reference key="2">
    <citation type="journal article" date="2000" name="DNA Res.">
        <title>Structural analysis of Arabidopsis thaliana chromosome 3. II. Sequence features of the 4,251,695 bp regions covered by 90 P1, TAC and BAC clones.</title>
        <authorList>
            <person name="Kaneko T."/>
            <person name="Katoh T."/>
            <person name="Sato S."/>
            <person name="Nakamura Y."/>
            <person name="Asamizu E."/>
            <person name="Tabata S."/>
        </authorList>
    </citation>
    <scope>NUCLEOTIDE SEQUENCE [LARGE SCALE GENOMIC DNA]</scope>
    <source>
        <strain>cv. Columbia</strain>
    </source>
</reference>
<reference key="3">
    <citation type="journal article" date="2017" name="Plant J.">
        <title>Araport11: a complete reannotation of the Arabidopsis thaliana reference genome.</title>
        <authorList>
            <person name="Cheng C.Y."/>
            <person name="Krishnakumar V."/>
            <person name="Chan A.P."/>
            <person name="Thibaud-Nissen F."/>
            <person name="Schobel S."/>
            <person name="Town C.D."/>
        </authorList>
    </citation>
    <scope>GENOME REANNOTATION</scope>
    <source>
        <strain>cv. Columbia</strain>
    </source>
</reference>
<reference key="4">
    <citation type="journal article" date="2003" name="Science">
        <title>Empirical analysis of transcriptional activity in the Arabidopsis genome.</title>
        <authorList>
            <person name="Yamada K."/>
            <person name="Lim J."/>
            <person name="Dale J.M."/>
            <person name="Chen H."/>
            <person name="Shinn P."/>
            <person name="Palm C.J."/>
            <person name="Southwick A.M."/>
            <person name="Wu H.C."/>
            <person name="Kim C.J."/>
            <person name="Nguyen M."/>
            <person name="Pham P.K."/>
            <person name="Cheuk R.F."/>
            <person name="Karlin-Newmann G."/>
            <person name="Liu S.X."/>
            <person name="Lam B."/>
            <person name="Sakano H."/>
            <person name="Wu T."/>
            <person name="Yu G."/>
            <person name="Miranda M."/>
            <person name="Quach H.L."/>
            <person name="Tripp M."/>
            <person name="Chang C.H."/>
            <person name="Lee J.M."/>
            <person name="Toriumi M.J."/>
            <person name="Chan M.M."/>
            <person name="Tang C.C."/>
            <person name="Onodera C.S."/>
            <person name="Deng J.M."/>
            <person name="Akiyama K."/>
            <person name="Ansari Y."/>
            <person name="Arakawa T."/>
            <person name="Banh J."/>
            <person name="Banno F."/>
            <person name="Bowser L."/>
            <person name="Brooks S.Y."/>
            <person name="Carninci P."/>
            <person name="Chao Q."/>
            <person name="Choy N."/>
            <person name="Enju A."/>
            <person name="Goldsmith A.D."/>
            <person name="Gurjal M."/>
            <person name="Hansen N.F."/>
            <person name="Hayashizaki Y."/>
            <person name="Johnson-Hopson C."/>
            <person name="Hsuan V.W."/>
            <person name="Iida K."/>
            <person name="Karnes M."/>
            <person name="Khan S."/>
            <person name="Koesema E."/>
            <person name="Ishida J."/>
            <person name="Jiang P.X."/>
            <person name="Jones T."/>
            <person name="Kawai J."/>
            <person name="Kamiya A."/>
            <person name="Meyers C."/>
            <person name="Nakajima M."/>
            <person name="Narusaka M."/>
            <person name="Seki M."/>
            <person name="Sakurai T."/>
            <person name="Satou M."/>
            <person name="Tamse R."/>
            <person name="Vaysberg M."/>
            <person name="Wallender E.K."/>
            <person name="Wong C."/>
            <person name="Yamamura Y."/>
            <person name="Yuan S."/>
            <person name="Shinozaki K."/>
            <person name="Davis R.W."/>
            <person name="Theologis A."/>
            <person name="Ecker J.R."/>
        </authorList>
    </citation>
    <scope>NUCLEOTIDE SEQUENCE [LARGE SCALE MRNA]</scope>
    <source>
        <strain>cv. Columbia</strain>
    </source>
</reference>
<reference key="5">
    <citation type="journal article" date="2009" name="J. Proteomics">
        <title>Phosphoproteomic analysis of nuclei-enriched fractions from Arabidopsis thaliana.</title>
        <authorList>
            <person name="Jones A.M.E."/>
            <person name="MacLean D."/>
            <person name="Studholme D.J."/>
            <person name="Serna-Sanz A."/>
            <person name="Andreasson E."/>
            <person name="Rathjen J.P."/>
            <person name="Peck S.C."/>
        </authorList>
    </citation>
    <scope>PHOSPHORYLATION [LARGE SCALE ANALYSIS] AT SER-334</scope>
    <scope>IDENTIFICATION BY MASS SPECTROMETRY [LARGE SCALE ANALYSIS]</scope>
    <source>
        <strain>cv. Columbia</strain>
    </source>
</reference>
<comment type="function">
    <text>Does not seem to have conserved a kinase activity.</text>
</comment>
<comment type="subcellular location">
    <subcellularLocation>
        <location>Membrane</location>
        <topology>Single-pass type I membrane protein</topology>
    </subcellularLocation>
</comment>
<comment type="domain">
    <text>The protein kinase domain is predicted to be catalytically inactive.</text>
</comment>
<comment type="similarity">
    <text evidence="6">Belongs to the protein kinase superfamily.</text>
</comment>
<protein>
    <recommendedName>
        <fullName>Putative kinase-like protein TMKL1</fullName>
    </recommendedName>
</protein>
<feature type="signal peptide" evidence="3">
    <location>
        <begin position="1"/>
        <end position="25"/>
    </location>
</feature>
<feature type="chain" id="PRO_0000024389" description="Putative kinase-like protein TMKL1">
    <location>
        <begin position="26"/>
        <end position="674"/>
    </location>
</feature>
<feature type="topological domain" description="Extracellular" evidence="3">
    <location>
        <begin position="26"/>
        <end position="295"/>
    </location>
</feature>
<feature type="transmembrane region" description="Helical" evidence="3">
    <location>
        <begin position="296"/>
        <end position="323"/>
    </location>
</feature>
<feature type="topological domain" description="Cytoplasmic" evidence="3">
    <location>
        <begin position="324"/>
        <end position="674"/>
    </location>
</feature>
<feature type="repeat" description="LRR 1">
    <location>
        <begin position="100"/>
        <end position="122"/>
    </location>
</feature>
<feature type="repeat" description="LRR 2">
    <location>
        <begin position="124"/>
        <end position="146"/>
    </location>
</feature>
<feature type="repeat" description="LRR 3">
    <location>
        <begin position="148"/>
        <end position="169"/>
    </location>
</feature>
<feature type="repeat" description="LRR 4">
    <location>
        <begin position="173"/>
        <end position="194"/>
    </location>
</feature>
<feature type="repeat" description="LRR 5">
    <location>
        <begin position="200"/>
        <end position="222"/>
    </location>
</feature>
<feature type="repeat" description="LRR 6">
    <location>
        <begin position="224"/>
        <end position="244"/>
    </location>
</feature>
<feature type="repeat" description="LRR 7">
    <location>
        <begin position="247"/>
        <end position="269"/>
    </location>
</feature>
<feature type="domain" description="Protein kinase" evidence="4">
    <location>
        <begin position="373"/>
        <end position="674"/>
    </location>
</feature>
<feature type="region of interest" description="Disordered" evidence="5">
    <location>
        <begin position="331"/>
        <end position="350"/>
    </location>
</feature>
<feature type="region of interest" description="Disordered" evidence="5">
    <location>
        <begin position="649"/>
        <end position="674"/>
    </location>
</feature>
<feature type="compositionally biased region" description="Acidic residues" evidence="5">
    <location>
        <begin position="333"/>
        <end position="348"/>
    </location>
</feature>
<feature type="modified residue" description="Phosphoserine" evidence="7">
    <location>
        <position position="334"/>
    </location>
</feature>
<feature type="modified residue" description="Phosphothreonine" evidence="2">
    <location>
        <position position="375"/>
    </location>
</feature>
<feature type="modified residue" description="Phosphoserine" evidence="1">
    <location>
        <position position="454"/>
    </location>
</feature>
<feature type="glycosylation site" description="N-linked (GlcNAc...) asparagine" evidence="3">
    <location>
        <position position="57"/>
    </location>
</feature>
<feature type="glycosylation site" description="N-linked (GlcNAc...) asparagine" evidence="3">
    <location>
        <position position="90"/>
    </location>
</feature>
<feature type="glycosylation site" description="N-linked (GlcNAc...) asparagine" evidence="3">
    <location>
        <position position="95"/>
    </location>
</feature>
<feature type="glycosylation site" description="N-linked (GlcNAc...) asparagine" evidence="3">
    <location>
        <position position="110"/>
    </location>
</feature>
<feature type="glycosylation site" description="N-linked (GlcNAc...) asparagine" evidence="3">
    <location>
        <position position="183"/>
    </location>
</feature>
<feature type="glycosylation site" description="N-linked (GlcNAc...) asparagine" evidence="3">
    <location>
        <position position="195"/>
    </location>
</feature>
<feature type="glycosylation site" description="N-linked (GlcNAc...) asparagine" evidence="3">
    <location>
        <position position="252"/>
    </location>
</feature>
<feature type="glycosylation site" description="N-linked (GlcNAc...) asparagine" evidence="3">
    <location>
        <position position="257"/>
    </location>
</feature>
<dbReference type="EMBL" id="X72863">
    <property type="protein sequence ID" value="CAA51385.1"/>
    <property type="molecule type" value="mRNA"/>
</dbReference>
<dbReference type="EMBL" id="AP000740">
    <property type="protein sequence ID" value="BAB01215.1"/>
    <property type="molecule type" value="Genomic_DNA"/>
</dbReference>
<dbReference type="EMBL" id="CP002686">
    <property type="protein sequence ID" value="AEE76934.1"/>
    <property type="molecule type" value="Genomic_DNA"/>
</dbReference>
<dbReference type="EMBL" id="AY090945">
    <property type="protein sequence ID" value="AAM13993.1"/>
    <property type="molecule type" value="mRNA"/>
</dbReference>
<dbReference type="PIR" id="S39476">
    <property type="entry name" value="S39476"/>
</dbReference>
<dbReference type="RefSeq" id="NP_189109.1">
    <property type="nucleotide sequence ID" value="NM_113377.4"/>
</dbReference>
<dbReference type="SMR" id="P33543"/>
<dbReference type="BioGRID" id="7393">
    <property type="interactions" value="49"/>
</dbReference>
<dbReference type="FunCoup" id="P33543">
    <property type="interactions" value="230"/>
</dbReference>
<dbReference type="STRING" id="3702.P33543"/>
<dbReference type="GlyCosmos" id="P33543">
    <property type="glycosylation" value="8 sites, No reported glycans"/>
</dbReference>
<dbReference type="GlyGen" id="P33543">
    <property type="glycosylation" value="8 sites"/>
</dbReference>
<dbReference type="iPTMnet" id="P33543"/>
<dbReference type="PaxDb" id="3702-AT3G24660.1"/>
<dbReference type="ProteomicsDB" id="232646"/>
<dbReference type="EnsemblPlants" id="AT3G24660.1">
    <property type="protein sequence ID" value="AT3G24660.1"/>
    <property type="gene ID" value="AT3G24660"/>
</dbReference>
<dbReference type="GeneID" id="822062"/>
<dbReference type="Gramene" id="AT3G24660.1">
    <property type="protein sequence ID" value="AT3G24660.1"/>
    <property type="gene ID" value="AT3G24660"/>
</dbReference>
<dbReference type="KEGG" id="ath:AT3G24660"/>
<dbReference type="Araport" id="AT3G24660"/>
<dbReference type="TAIR" id="AT3G24660">
    <property type="gene designation" value="TMKL1"/>
</dbReference>
<dbReference type="eggNOG" id="ENOG502QVB6">
    <property type="taxonomic scope" value="Eukaryota"/>
</dbReference>
<dbReference type="HOGENOM" id="CLU_000288_92_6_1"/>
<dbReference type="InParanoid" id="P33543"/>
<dbReference type="OMA" id="EIGEFSM"/>
<dbReference type="PhylomeDB" id="P33543"/>
<dbReference type="PRO" id="PR:P33543"/>
<dbReference type="Proteomes" id="UP000006548">
    <property type="component" value="Chromosome 3"/>
</dbReference>
<dbReference type="ExpressionAtlas" id="P33543">
    <property type="expression patterns" value="baseline and differential"/>
</dbReference>
<dbReference type="GO" id="GO:0005886">
    <property type="term" value="C:plasma membrane"/>
    <property type="evidence" value="ECO:0007005"/>
    <property type="project" value="TAIR"/>
</dbReference>
<dbReference type="GO" id="GO:0009506">
    <property type="term" value="C:plasmodesma"/>
    <property type="evidence" value="ECO:0007005"/>
    <property type="project" value="TAIR"/>
</dbReference>
<dbReference type="GO" id="GO:0005524">
    <property type="term" value="F:ATP binding"/>
    <property type="evidence" value="ECO:0007669"/>
    <property type="project" value="InterPro"/>
</dbReference>
<dbReference type="GO" id="GO:0004672">
    <property type="term" value="F:protein kinase activity"/>
    <property type="evidence" value="ECO:0007669"/>
    <property type="project" value="InterPro"/>
</dbReference>
<dbReference type="FunFam" id="3.80.10.10:FF:000731">
    <property type="entry name" value="Leucine-rich repeat receptor-like protein kinase"/>
    <property type="match status" value="1"/>
</dbReference>
<dbReference type="FunFam" id="1.10.510.10:FF:000480">
    <property type="entry name" value="Pollen receptor-like kinase 1"/>
    <property type="match status" value="1"/>
</dbReference>
<dbReference type="FunFam" id="3.80.10.10:FF:001612">
    <property type="entry name" value="Putative kinase-like protein TMKL1"/>
    <property type="match status" value="1"/>
</dbReference>
<dbReference type="Gene3D" id="3.30.200.20">
    <property type="entry name" value="Phosphorylase Kinase, domain 1"/>
    <property type="match status" value="1"/>
</dbReference>
<dbReference type="Gene3D" id="3.80.10.10">
    <property type="entry name" value="Ribonuclease Inhibitor"/>
    <property type="match status" value="2"/>
</dbReference>
<dbReference type="Gene3D" id="1.10.510.10">
    <property type="entry name" value="Transferase(Phosphotransferase) domain 1"/>
    <property type="match status" value="1"/>
</dbReference>
<dbReference type="InterPro" id="IPR011009">
    <property type="entry name" value="Kinase-like_dom_sf"/>
</dbReference>
<dbReference type="InterPro" id="IPR001611">
    <property type="entry name" value="Leu-rich_rpt"/>
</dbReference>
<dbReference type="InterPro" id="IPR032675">
    <property type="entry name" value="LRR_dom_sf"/>
</dbReference>
<dbReference type="InterPro" id="IPR013210">
    <property type="entry name" value="LRR_N_plant-typ"/>
</dbReference>
<dbReference type="InterPro" id="IPR046959">
    <property type="entry name" value="PRK1-6/SRF4-like"/>
</dbReference>
<dbReference type="InterPro" id="IPR000719">
    <property type="entry name" value="Prot_kinase_dom"/>
</dbReference>
<dbReference type="InterPro" id="IPR001245">
    <property type="entry name" value="Ser-Thr/Tyr_kinase_cat_dom"/>
</dbReference>
<dbReference type="PANTHER" id="PTHR48007:SF32">
    <property type="entry name" value="KINASE-LIKE PROTEIN TMKL1-RELATED"/>
    <property type="match status" value="1"/>
</dbReference>
<dbReference type="PANTHER" id="PTHR48007">
    <property type="entry name" value="LEUCINE-RICH REPEAT RECEPTOR-LIKE PROTEIN KINASE PXC1"/>
    <property type="match status" value="1"/>
</dbReference>
<dbReference type="Pfam" id="PF00560">
    <property type="entry name" value="LRR_1"/>
    <property type="match status" value="1"/>
</dbReference>
<dbReference type="Pfam" id="PF13855">
    <property type="entry name" value="LRR_8"/>
    <property type="match status" value="1"/>
</dbReference>
<dbReference type="Pfam" id="PF08263">
    <property type="entry name" value="LRRNT_2"/>
    <property type="match status" value="1"/>
</dbReference>
<dbReference type="Pfam" id="PF07714">
    <property type="entry name" value="PK_Tyr_Ser-Thr"/>
    <property type="match status" value="1"/>
</dbReference>
<dbReference type="SUPFAM" id="SSF52058">
    <property type="entry name" value="L domain-like"/>
    <property type="match status" value="1"/>
</dbReference>
<dbReference type="SUPFAM" id="SSF56112">
    <property type="entry name" value="Protein kinase-like (PK-like)"/>
    <property type="match status" value="1"/>
</dbReference>
<dbReference type="PROSITE" id="PS50011">
    <property type="entry name" value="PROTEIN_KINASE_DOM"/>
    <property type="match status" value="1"/>
</dbReference>
<gene>
    <name type="primary">TMKL1</name>
    <name type="ordered locus">At3g24660</name>
    <name type="ORF">MSD24.3</name>
</gene>
<organism>
    <name type="scientific">Arabidopsis thaliana</name>
    <name type="common">Mouse-ear cress</name>
    <dbReference type="NCBI Taxonomy" id="3702"/>
    <lineage>
        <taxon>Eukaryota</taxon>
        <taxon>Viridiplantae</taxon>
        <taxon>Streptophyta</taxon>
        <taxon>Embryophyta</taxon>
        <taxon>Tracheophyta</taxon>
        <taxon>Spermatophyta</taxon>
        <taxon>Magnoliopsida</taxon>
        <taxon>eudicotyledons</taxon>
        <taxon>Gunneridae</taxon>
        <taxon>Pentapetalae</taxon>
        <taxon>rosids</taxon>
        <taxon>malvids</taxon>
        <taxon>Brassicales</taxon>
        <taxon>Brassicaceae</taxon>
        <taxon>Camelineae</taxon>
        <taxon>Arabidopsis</taxon>
    </lineage>
</organism>